<sequence length="265" mass="28790">MSDMITAAILGLVEGLTEFLPVSSTGHLIITGELLGFTGPKAATFEVAIQLGAILAVVVLYWDRFWGLLRPQPYVRFAGLRGIMLLLLTSLPASVLGLAAHSTIKAHLFTPSTVAIALAVGAIFMLLVERRTERPRYMTLDEMSPALALGIGCFQCLALWPGFSRSAATIMGGMLLGARRGLAAEYSFIAAVPIMFAATGYDLLKSWTLFTPADLPFFATGFVVSFLSAWAAVKLFIALVGRMTFRPFAWYRLAIAPLVYYFMAY</sequence>
<reference key="1">
    <citation type="journal article" date="2009" name="Environ. Microbiol.">
        <title>Contribution of mobile genetic elements to Desulfovibrio vulgaris genome plasticity.</title>
        <authorList>
            <person name="Walker C.B."/>
            <person name="Stolyar S."/>
            <person name="Chivian D."/>
            <person name="Pinel N."/>
            <person name="Gabster J.A."/>
            <person name="Dehal P.S."/>
            <person name="He Z."/>
            <person name="Yang Z.K."/>
            <person name="Yen H.C."/>
            <person name="Zhou J."/>
            <person name="Wall J.D."/>
            <person name="Hazen T.C."/>
            <person name="Arkin A.P."/>
            <person name="Stahl D.A."/>
        </authorList>
    </citation>
    <scope>NUCLEOTIDE SEQUENCE [LARGE SCALE GENOMIC DNA]</scope>
    <source>
        <strain>DP4</strain>
    </source>
</reference>
<feature type="chain" id="PRO_0000290705" description="Undecaprenyl-diphosphatase">
    <location>
        <begin position="1"/>
        <end position="265"/>
    </location>
</feature>
<feature type="transmembrane region" description="Helical" evidence="1">
    <location>
        <begin position="42"/>
        <end position="62"/>
    </location>
</feature>
<feature type="transmembrane region" description="Helical" evidence="1">
    <location>
        <begin position="82"/>
        <end position="102"/>
    </location>
</feature>
<feature type="transmembrane region" description="Helical" evidence="1">
    <location>
        <begin position="108"/>
        <end position="128"/>
    </location>
</feature>
<feature type="transmembrane region" description="Helical" evidence="1">
    <location>
        <begin position="143"/>
        <end position="163"/>
    </location>
</feature>
<feature type="transmembrane region" description="Helical" evidence="1">
    <location>
        <begin position="181"/>
        <end position="201"/>
    </location>
</feature>
<feature type="transmembrane region" description="Helical" evidence="1">
    <location>
        <begin position="221"/>
        <end position="241"/>
    </location>
</feature>
<feature type="transmembrane region" description="Helical" evidence="1">
    <location>
        <begin position="248"/>
        <end position="264"/>
    </location>
</feature>
<protein>
    <recommendedName>
        <fullName evidence="1">Undecaprenyl-diphosphatase</fullName>
        <ecNumber evidence="1">3.6.1.27</ecNumber>
    </recommendedName>
    <alternativeName>
        <fullName evidence="1">Bacitracin resistance protein</fullName>
    </alternativeName>
    <alternativeName>
        <fullName evidence="1">Undecaprenyl pyrophosphate phosphatase</fullName>
    </alternativeName>
</protein>
<accession>A1VDC9</accession>
<name>UPPP_NITV4</name>
<evidence type="ECO:0000255" key="1">
    <source>
        <dbReference type="HAMAP-Rule" id="MF_01006"/>
    </source>
</evidence>
<keyword id="KW-0046">Antibiotic resistance</keyword>
<keyword id="KW-0997">Cell inner membrane</keyword>
<keyword id="KW-1003">Cell membrane</keyword>
<keyword id="KW-0133">Cell shape</keyword>
<keyword id="KW-0961">Cell wall biogenesis/degradation</keyword>
<keyword id="KW-0378">Hydrolase</keyword>
<keyword id="KW-0472">Membrane</keyword>
<keyword id="KW-0573">Peptidoglycan synthesis</keyword>
<keyword id="KW-0812">Transmembrane</keyword>
<keyword id="KW-1133">Transmembrane helix</keyword>
<comment type="function">
    <text evidence="1">Catalyzes the dephosphorylation of undecaprenyl diphosphate (UPP). Confers resistance to bacitracin.</text>
</comment>
<comment type="catalytic activity">
    <reaction evidence="1">
        <text>di-trans,octa-cis-undecaprenyl diphosphate + H2O = di-trans,octa-cis-undecaprenyl phosphate + phosphate + H(+)</text>
        <dbReference type="Rhea" id="RHEA:28094"/>
        <dbReference type="ChEBI" id="CHEBI:15377"/>
        <dbReference type="ChEBI" id="CHEBI:15378"/>
        <dbReference type="ChEBI" id="CHEBI:43474"/>
        <dbReference type="ChEBI" id="CHEBI:58405"/>
        <dbReference type="ChEBI" id="CHEBI:60392"/>
        <dbReference type="EC" id="3.6.1.27"/>
    </reaction>
</comment>
<comment type="subcellular location">
    <subcellularLocation>
        <location evidence="1">Cell inner membrane</location>
        <topology evidence="1">Multi-pass membrane protein</topology>
    </subcellularLocation>
</comment>
<comment type="miscellaneous">
    <text>Bacitracin is thought to be involved in the inhibition of peptidoglycan synthesis by sequestering undecaprenyl diphosphate, thereby reducing the pool of lipid carrier available.</text>
</comment>
<comment type="similarity">
    <text evidence="1">Belongs to the UppP family.</text>
</comment>
<dbReference type="EC" id="3.6.1.27" evidence="1"/>
<dbReference type="EMBL" id="CP000527">
    <property type="protein sequence ID" value="ABM28445.1"/>
    <property type="molecule type" value="Genomic_DNA"/>
</dbReference>
<dbReference type="RefSeq" id="WP_011792249.1">
    <property type="nucleotide sequence ID" value="NC_008751.1"/>
</dbReference>
<dbReference type="SMR" id="A1VDC9"/>
<dbReference type="KEGG" id="dvl:Dvul_1427"/>
<dbReference type="HOGENOM" id="CLU_060296_2_0_7"/>
<dbReference type="Proteomes" id="UP000009173">
    <property type="component" value="Chromosome"/>
</dbReference>
<dbReference type="GO" id="GO:0005886">
    <property type="term" value="C:plasma membrane"/>
    <property type="evidence" value="ECO:0007669"/>
    <property type="project" value="UniProtKB-SubCell"/>
</dbReference>
<dbReference type="GO" id="GO:0050380">
    <property type="term" value="F:undecaprenyl-diphosphatase activity"/>
    <property type="evidence" value="ECO:0007669"/>
    <property type="project" value="UniProtKB-UniRule"/>
</dbReference>
<dbReference type="GO" id="GO:0071555">
    <property type="term" value="P:cell wall organization"/>
    <property type="evidence" value="ECO:0007669"/>
    <property type="project" value="UniProtKB-KW"/>
</dbReference>
<dbReference type="GO" id="GO:0009252">
    <property type="term" value="P:peptidoglycan biosynthetic process"/>
    <property type="evidence" value="ECO:0007669"/>
    <property type="project" value="UniProtKB-KW"/>
</dbReference>
<dbReference type="GO" id="GO:0008360">
    <property type="term" value="P:regulation of cell shape"/>
    <property type="evidence" value="ECO:0007669"/>
    <property type="project" value="UniProtKB-KW"/>
</dbReference>
<dbReference type="GO" id="GO:0046677">
    <property type="term" value="P:response to antibiotic"/>
    <property type="evidence" value="ECO:0007669"/>
    <property type="project" value="UniProtKB-UniRule"/>
</dbReference>
<dbReference type="HAMAP" id="MF_01006">
    <property type="entry name" value="Undec_diphosphatase"/>
    <property type="match status" value="1"/>
</dbReference>
<dbReference type="InterPro" id="IPR003824">
    <property type="entry name" value="UppP"/>
</dbReference>
<dbReference type="NCBIfam" id="NF001389">
    <property type="entry name" value="PRK00281.1-2"/>
    <property type="match status" value="1"/>
</dbReference>
<dbReference type="NCBIfam" id="NF001390">
    <property type="entry name" value="PRK00281.1-4"/>
    <property type="match status" value="1"/>
</dbReference>
<dbReference type="NCBIfam" id="TIGR00753">
    <property type="entry name" value="undec_PP_bacA"/>
    <property type="match status" value="1"/>
</dbReference>
<dbReference type="PANTHER" id="PTHR30622">
    <property type="entry name" value="UNDECAPRENYL-DIPHOSPHATASE"/>
    <property type="match status" value="1"/>
</dbReference>
<dbReference type="PANTHER" id="PTHR30622:SF3">
    <property type="entry name" value="UNDECAPRENYL-DIPHOSPHATASE"/>
    <property type="match status" value="1"/>
</dbReference>
<dbReference type="Pfam" id="PF02673">
    <property type="entry name" value="BacA"/>
    <property type="match status" value="1"/>
</dbReference>
<proteinExistence type="inferred from homology"/>
<organism>
    <name type="scientific">Nitratidesulfovibrio vulgaris (strain DP4)</name>
    <name type="common">Desulfovibrio vulgaris</name>
    <dbReference type="NCBI Taxonomy" id="391774"/>
    <lineage>
        <taxon>Bacteria</taxon>
        <taxon>Pseudomonadati</taxon>
        <taxon>Thermodesulfobacteriota</taxon>
        <taxon>Desulfovibrionia</taxon>
        <taxon>Desulfovibrionales</taxon>
        <taxon>Desulfovibrionaceae</taxon>
        <taxon>Nitratidesulfovibrio</taxon>
    </lineage>
</organism>
<gene>
    <name evidence="1" type="primary">uppP</name>
    <name type="ordered locus">Dvul_1427</name>
</gene>